<comment type="similarity">
    <text evidence="1">Belongs to the NAD(P)-dependent epimerase/dehydratase family.</text>
</comment>
<reference key="1">
    <citation type="journal article" date="1998" name="Nature">
        <title>Deciphering the biology of Mycobacterium tuberculosis from the complete genome sequence.</title>
        <authorList>
            <person name="Cole S.T."/>
            <person name="Brosch R."/>
            <person name="Parkhill J."/>
            <person name="Garnier T."/>
            <person name="Churcher C.M."/>
            <person name="Harris D.E."/>
            <person name="Gordon S.V."/>
            <person name="Eiglmeier K."/>
            <person name="Gas S."/>
            <person name="Barry C.E. III"/>
            <person name="Tekaia F."/>
            <person name="Badcock K."/>
            <person name="Basham D."/>
            <person name="Brown D."/>
            <person name="Chillingworth T."/>
            <person name="Connor R."/>
            <person name="Davies R.M."/>
            <person name="Devlin K."/>
            <person name="Feltwell T."/>
            <person name="Gentles S."/>
            <person name="Hamlin N."/>
            <person name="Holroyd S."/>
            <person name="Hornsby T."/>
            <person name="Jagels K."/>
            <person name="Krogh A."/>
            <person name="McLean J."/>
            <person name="Moule S."/>
            <person name="Murphy L.D."/>
            <person name="Oliver S."/>
            <person name="Osborne J."/>
            <person name="Quail M.A."/>
            <person name="Rajandream M.A."/>
            <person name="Rogers J."/>
            <person name="Rutter S."/>
            <person name="Seeger K."/>
            <person name="Skelton S."/>
            <person name="Squares S."/>
            <person name="Squares R."/>
            <person name="Sulston J.E."/>
            <person name="Taylor K."/>
            <person name="Whitehead S."/>
            <person name="Barrell B.G."/>
        </authorList>
    </citation>
    <scope>NUCLEOTIDE SEQUENCE [LARGE SCALE GENOMIC DNA]</scope>
    <source>
        <strain>ATCC 25618 / H37Rv</strain>
    </source>
</reference>
<reference key="2">
    <citation type="journal article" date="2011" name="Mol. Cell. Proteomics">
        <title>Proteogenomic analysis of Mycobacterium tuberculosis by high resolution mass spectrometry.</title>
        <authorList>
            <person name="Kelkar D.S."/>
            <person name="Kumar D."/>
            <person name="Kumar P."/>
            <person name="Balakrishnan L."/>
            <person name="Muthusamy B."/>
            <person name="Yadav A.K."/>
            <person name="Shrivastava P."/>
            <person name="Marimuthu A."/>
            <person name="Anand S."/>
            <person name="Sundaram H."/>
            <person name="Kingsbury R."/>
            <person name="Harsha H.C."/>
            <person name="Nair B."/>
            <person name="Prasad T.S."/>
            <person name="Chauhan D.S."/>
            <person name="Katoch K."/>
            <person name="Katoch V.M."/>
            <person name="Kumar P."/>
            <person name="Chaerkady R."/>
            <person name="Ramachandran S."/>
            <person name="Dash D."/>
            <person name="Pandey A."/>
        </authorList>
    </citation>
    <scope>IDENTIFICATION BY MASS SPECTROMETRY [LARGE SCALE ANALYSIS]</scope>
    <source>
        <strain>ATCC 25618 / H37Rv</strain>
    </source>
</reference>
<keyword id="KW-1185">Reference proteome</keyword>
<organism>
    <name type="scientific">Mycobacterium tuberculosis (strain ATCC 25618 / H37Rv)</name>
    <dbReference type="NCBI Taxonomy" id="83332"/>
    <lineage>
        <taxon>Bacteria</taxon>
        <taxon>Bacillati</taxon>
        <taxon>Actinomycetota</taxon>
        <taxon>Actinomycetes</taxon>
        <taxon>Mycobacteriales</taxon>
        <taxon>Mycobacteriaceae</taxon>
        <taxon>Mycobacterium</taxon>
        <taxon>Mycobacterium tuberculosis complex</taxon>
    </lineage>
</organism>
<gene>
    <name type="ordered locus">Rv0501</name>
    <name type="ORF">MTCY20G9.28</name>
</gene>
<proteinExistence type="evidence at protein level"/>
<name>Y501_MYCTU</name>
<evidence type="ECO:0000305" key="1"/>
<protein>
    <recommendedName>
        <fullName>Uncharacterized protein Rv0501</fullName>
    </recommendedName>
</protein>
<dbReference type="EMBL" id="AL123456">
    <property type="protein sequence ID" value="CCP43238.1"/>
    <property type="molecule type" value="Genomic_DNA"/>
</dbReference>
<dbReference type="PIR" id="C70546">
    <property type="entry name" value="C70546"/>
</dbReference>
<dbReference type="PIR" id="H70745">
    <property type="entry name" value="H70745"/>
</dbReference>
<dbReference type="RefSeq" id="WP_003402607.1">
    <property type="nucleotide sequence ID" value="NZ_NVQJ01000002.1"/>
</dbReference>
<dbReference type="SMR" id="P9WKT3"/>
<dbReference type="FunCoup" id="P9WKT3">
    <property type="interactions" value="38"/>
</dbReference>
<dbReference type="STRING" id="83332.Rv0501"/>
<dbReference type="PaxDb" id="83332-Rv0501"/>
<dbReference type="DNASU" id="887228"/>
<dbReference type="KEGG" id="mtu:Rv0501"/>
<dbReference type="KEGG" id="mtv:RVBD_0501"/>
<dbReference type="TubercuList" id="Rv0501"/>
<dbReference type="eggNOG" id="COG0451">
    <property type="taxonomic scope" value="Bacteria"/>
</dbReference>
<dbReference type="InParanoid" id="P9WKT3"/>
<dbReference type="OrthoDB" id="3205647at2"/>
<dbReference type="PhylomeDB" id="P9WKT3"/>
<dbReference type="Proteomes" id="UP000001584">
    <property type="component" value="Chromosome"/>
</dbReference>
<dbReference type="GO" id="GO:0005829">
    <property type="term" value="C:cytosol"/>
    <property type="evidence" value="ECO:0007005"/>
    <property type="project" value="MTBBASE"/>
</dbReference>
<dbReference type="GO" id="GO:0005576">
    <property type="term" value="C:extracellular region"/>
    <property type="evidence" value="ECO:0007005"/>
    <property type="project" value="MTBBASE"/>
</dbReference>
<dbReference type="GO" id="GO:0005886">
    <property type="term" value="C:plasma membrane"/>
    <property type="evidence" value="ECO:0007005"/>
    <property type="project" value="MTBBASE"/>
</dbReference>
<dbReference type="CDD" id="cd05240">
    <property type="entry name" value="UDP_G4E_3_SDR_e"/>
    <property type="match status" value="1"/>
</dbReference>
<dbReference type="FunFam" id="3.40.50.720:FF:000342">
    <property type="entry name" value="NAD dependent epimerase/dehydratase family protein"/>
    <property type="match status" value="1"/>
</dbReference>
<dbReference type="Gene3D" id="3.40.50.720">
    <property type="entry name" value="NAD(P)-binding Rossmann-like Domain"/>
    <property type="match status" value="1"/>
</dbReference>
<dbReference type="InterPro" id="IPR001509">
    <property type="entry name" value="Epimerase_deHydtase"/>
</dbReference>
<dbReference type="InterPro" id="IPR050177">
    <property type="entry name" value="Lipid_A_modif_metabolic_enz"/>
</dbReference>
<dbReference type="InterPro" id="IPR036291">
    <property type="entry name" value="NAD(P)-bd_dom_sf"/>
</dbReference>
<dbReference type="PANTHER" id="PTHR43245">
    <property type="entry name" value="BIFUNCTIONAL POLYMYXIN RESISTANCE PROTEIN ARNA"/>
    <property type="match status" value="1"/>
</dbReference>
<dbReference type="PANTHER" id="PTHR43245:SF52">
    <property type="entry name" value="NAD-DEPENDENT EPIMERASE_DEHYDRATASE"/>
    <property type="match status" value="1"/>
</dbReference>
<dbReference type="Pfam" id="PF01370">
    <property type="entry name" value="Epimerase"/>
    <property type="match status" value="1"/>
</dbReference>
<dbReference type="SUPFAM" id="SSF51735">
    <property type="entry name" value="NAD(P)-binding Rossmann-fold domains"/>
    <property type="match status" value="1"/>
</dbReference>
<sequence>MSSSNGRGGAGGVGGSSEHPQYPKVVLVTGACRFLGGYLTARLAQNPLINRVIAVDAIAPSKDMLRRMGRAEFVRADIRNPFIAKVIRNGEVDTVVHAAAASYAPRSGGSAALKELNVMGAMQLFAACQKAPSVRRVVLKSTSEVYGSSPHDPVMFTEDSSSRRPFSQGFPKDSLDIEGYVRALGRRRPDIAVTILRLANMIGPAMDTTLSRYLAGPLVPTIFGRDARLQLLHEQDALGALERAAMAGKAGTFNIGADGILMLSQAIRRAGRIPVPVPGFGVWALDSLRRANHYTELNREQFAYLSYGRVMDTTRMRVELGYQPKWTTVEAFDDYFRGRGLTPIIDPHRVRSWEGRAVGLAQRWGSRNPIPWSGLR</sequence>
<feature type="chain" id="PRO_0000103707" description="Uncharacterized protein Rv0501">
    <location>
        <begin position="1"/>
        <end position="376"/>
    </location>
</feature>
<accession>P9WKT3</accession>
<accession>L0T6P0</accession>
<accession>O06402</accession>
<accession>P0A5D1</accession>
<accession>Q11166</accession>